<dbReference type="EC" id="2.4.2.7" evidence="1"/>
<dbReference type="EMBL" id="U28961">
    <property type="protein sequence ID" value="AAA69924.1"/>
    <property type="molecule type" value="Genomic_DNA"/>
</dbReference>
<dbReference type="SMR" id="Q64414"/>
<dbReference type="UniPathway" id="UPA00588">
    <property type="reaction ID" value="UER00646"/>
</dbReference>
<dbReference type="GO" id="GO:0005737">
    <property type="term" value="C:cytoplasm"/>
    <property type="evidence" value="ECO:0007669"/>
    <property type="project" value="UniProtKB-SubCell"/>
</dbReference>
<dbReference type="GO" id="GO:0002055">
    <property type="term" value="F:adenine binding"/>
    <property type="evidence" value="ECO:0007669"/>
    <property type="project" value="TreeGrafter"/>
</dbReference>
<dbReference type="GO" id="GO:0003999">
    <property type="term" value="F:adenine phosphoribosyltransferase activity"/>
    <property type="evidence" value="ECO:0000250"/>
    <property type="project" value="UniProtKB"/>
</dbReference>
<dbReference type="GO" id="GO:0016208">
    <property type="term" value="F:AMP binding"/>
    <property type="evidence" value="ECO:0007669"/>
    <property type="project" value="TreeGrafter"/>
</dbReference>
<dbReference type="GO" id="GO:0006168">
    <property type="term" value="P:adenine salvage"/>
    <property type="evidence" value="ECO:0007669"/>
    <property type="project" value="InterPro"/>
</dbReference>
<dbReference type="GO" id="GO:0044209">
    <property type="term" value="P:AMP salvage"/>
    <property type="evidence" value="ECO:0007669"/>
    <property type="project" value="UniProtKB-UniPathway"/>
</dbReference>
<dbReference type="GO" id="GO:0006166">
    <property type="term" value="P:purine ribonucleoside salvage"/>
    <property type="evidence" value="ECO:0007669"/>
    <property type="project" value="UniProtKB-KW"/>
</dbReference>
<dbReference type="CDD" id="cd06223">
    <property type="entry name" value="PRTases_typeI"/>
    <property type="match status" value="1"/>
</dbReference>
<dbReference type="FunFam" id="3.40.50.2020:FF:000123">
    <property type="entry name" value="Adenine phosphoribosyltransferase"/>
    <property type="match status" value="1"/>
</dbReference>
<dbReference type="Gene3D" id="3.40.50.2020">
    <property type="match status" value="1"/>
</dbReference>
<dbReference type="HAMAP" id="MF_00004">
    <property type="entry name" value="Aden_phosphoribosyltr"/>
    <property type="match status" value="1"/>
</dbReference>
<dbReference type="InterPro" id="IPR005764">
    <property type="entry name" value="Ade_phspho_trans"/>
</dbReference>
<dbReference type="InterPro" id="IPR000836">
    <property type="entry name" value="PRibTrfase_dom"/>
</dbReference>
<dbReference type="InterPro" id="IPR029057">
    <property type="entry name" value="PRTase-like"/>
</dbReference>
<dbReference type="InterPro" id="IPR050054">
    <property type="entry name" value="UPRTase/APRTase"/>
</dbReference>
<dbReference type="NCBIfam" id="TIGR01090">
    <property type="entry name" value="apt"/>
    <property type="match status" value="1"/>
</dbReference>
<dbReference type="NCBIfam" id="NF002634">
    <property type="entry name" value="PRK02304.1-3"/>
    <property type="match status" value="1"/>
</dbReference>
<dbReference type="NCBIfam" id="NF002636">
    <property type="entry name" value="PRK02304.1-5"/>
    <property type="match status" value="1"/>
</dbReference>
<dbReference type="PANTHER" id="PTHR32315">
    <property type="entry name" value="ADENINE PHOSPHORIBOSYLTRANSFERASE"/>
    <property type="match status" value="1"/>
</dbReference>
<dbReference type="PANTHER" id="PTHR32315:SF3">
    <property type="entry name" value="ADENINE PHOSPHORIBOSYLTRANSFERASE"/>
    <property type="match status" value="1"/>
</dbReference>
<dbReference type="Pfam" id="PF00156">
    <property type="entry name" value="Pribosyltran"/>
    <property type="match status" value="1"/>
</dbReference>
<dbReference type="SUPFAM" id="SSF53271">
    <property type="entry name" value="PRTase-like"/>
    <property type="match status" value="1"/>
</dbReference>
<dbReference type="PROSITE" id="PS00103">
    <property type="entry name" value="PUR_PYR_PR_TRANSFER"/>
    <property type="match status" value="1"/>
</dbReference>
<evidence type="ECO:0000250" key="1">
    <source>
        <dbReference type="UniProtKB" id="P07741"/>
    </source>
</evidence>
<evidence type="ECO:0000305" key="2"/>
<feature type="initiator methionine" description="Removed" evidence="1">
    <location>
        <position position="1"/>
    </location>
</feature>
<feature type="chain" id="PRO_0000149503" description="Adenine phosphoribosyltransferase">
    <location>
        <begin position="2"/>
        <end position="180"/>
    </location>
</feature>
<feature type="modified residue" description="N-acetylalanine" evidence="1">
    <location>
        <position position="2"/>
    </location>
</feature>
<feature type="modified residue" description="Phosphoserine" evidence="1">
    <location>
        <position position="15"/>
    </location>
</feature>
<feature type="modified residue" description="Phosphoserine" evidence="1">
    <location>
        <position position="30"/>
    </location>
</feature>
<feature type="modified residue" description="Phosphotyrosine" evidence="1">
    <location>
        <position position="60"/>
    </location>
</feature>
<feature type="modified residue" description="Phosphoserine" evidence="1">
    <location>
        <position position="66"/>
    </location>
</feature>
<feature type="modified residue" description="N6-acetyllysine" evidence="1">
    <location>
        <position position="114"/>
    </location>
</feature>
<feature type="modified residue" description="Phosphothreonine" evidence="1">
    <location>
        <position position="135"/>
    </location>
</feature>
<name>APT_DIPCP</name>
<reference key="1">
    <citation type="journal article" date="1997" name="Heredity">
        <title>Substitution rate variation in closely related rodent species.</title>
        <authorList>
            <person name="Fieldhouse D."/>
            <person name="Yazdani F."/>
            <person name="Golding G.B."/>
        </authorList>
    </citation>
    <scope>NUCLEOTIDE SEQUENCE [GENOMIC DNA]</scope>
</reference>
<organism>
    <name type="scientific">Dipodillus campestris</name>
    <name type="common">North African gerbil</name>
    <name type="synonym">Gerbillus campestris</name>
    <dbReference type="NCBI Taxonomy" id="41199"/>
    <lineage>
        <taxon>Eukaryota</taxon>
        <taxon>Metazoa</taxon>
        <taxon>Chordata</taxon>
        <taxon>Craniata</taxon>
        <taxon>Vertebrata</taxon>
        <taxon>Euteleostomi</taxon>
        <taxon>Mammalia</taxon>
        <taxon>Eutheria</taxon>
        <taxon>Euarchontoglires</taxon>
        <taxon>Glires</taxon>
        <taxon>Rodentia</taxon>
        <taxon>Myomorpha</taxon>
        <taxon>Muroidea</taxon>
        <taxon>Muridae</taxon>
        <taxon>Gerbillinae</taxon>
        <taxon>Dipodillus</taxon>
    </lineage>
</organism>
<sequence length="180" mass="19591">MAEPELQLVARRIRSFPDFPIPGVLFRDISPLLKDPDSFRASIRLLANHLKSKHGGKIDYIAGLDSRGFLFGPSLAQELGLGCVLIRKRGKLPGPTVSASYALEYGKAELEIQKDALEPGQKVVIVDDLLATGGTMCAACQLLGQLRAEVVECVSLVELTSLKGREKLGPVPFFSLLQYE</sequence>
<protein>
    <recommendedName>
        <fullName evidence="1">Adenine phosphoribosyltransferase</fullName>
        <shortName>APRT</shortName>
        <ecNumber evidence="1">2.4.2.7</ecNumber>
    </recommendedName>
</protein>
<gene>
    <name evidence="1" type="primary">APRT</name>
</gene>
<keyword id="KW-0007">Acetylation</keyword>
<keyword id="KW-0963">Cytoplasm</keyword>
<keyword id="KW-0328">Glycosyltransferase</keyword>
<keyword id="KW-0597">Phosphoprotein</keyword>
<keyword id="KW-0660">Purine salvage</keyword>
<keyword id="KW-0808">Transferase</keyword>
<accession>Q64414</accession>
<comment type="function">
    <text evidence="1">Catalyzes a salvage reaction resulting in the formation of AMP, that is energically less costly than de novo synthesis.</text>
</comment>
<comment type="catalytic activity">
    <reaction evidence="1">
        <text>AMP + diphosphate = 5-phospho-alpha-D-ribose 1-diphosphate + adenine</text>
        <dbReference type="Rhea" id="RHEA:16609"/>
        <dbReference type="ChEBI" id="CHEBI:16708"/>
        <dbReference type="ChEBI" id="CHEBI:33019"/>
        <dbReference type="ChEBI" id="CHEBI:58017"/>
        <dbReference type="ChEBI" id="CHEBI:456215"/>
        <dbReference type="EC" id="2.4.2.7"/>
    </reaction>
</comment>
<comment type="pathway">
    <text evidence="1">Purine metabolism; AMP biosynthesis via salvage pathway; AMP from adenine: step 1/1.</text>
</comment>
<comment type="subunit">
    <text>Homodimer.</text>
</comment>
<comment type="subcellular location">
    <subcellularLocation>
        <location>Cytoplasm</location>
    </subcellularLocation>
</comment>
<comment type="similarity">
    <text evidence="2">Belongs to the purine/pyrimidine phosphoribosyltransferase family.</text>
</comment>
<proteinExistence type="inferred from homology"/>